<organism>
    <name type="scientific">Prochlorococcus marinus (strain MIT 9303)</name>
    <dbReference type="NCBI Taxonomy" id="59922"/>
    <lineage>
        <taxon>Bacteria</taxon>
        <taxon>Bacillati</taxon>
        <taxon>Cyanobacteriota</taxon>
        <taxon>Cyanophyceae</taxon>
        <taxon>Synechococcales</taxon>
        <taxon>Prochlorococcaceae</taxon>
        <taxon>Prochlorococcus</taxon>
    </lineage>
</organism>
<sequence>MKVRVRLAPSPTGTLHIGTARTAVFNWLFARHQGGEFLVRIEDTDKERSKPEFTTNILEGLKWLGLNWDEQPIIQSQHVDDHRAAIQKLLDLDLAYRCYASETELEAMRETQKAQGQAPRYDNRHRNLNPEQEAAFQSEGRSAVVRFRIDDVAAISWKDLVRGPMHWRGSDLGGDMVISRRAPAKEIGDPLYNLVVVVDDAAMSISHVIRGEDHIANTAKQLLIYEALGLPIPQFAHTPLILNSEGRKLSKRDGVTSISDFQAMGYTAEAMANYMTLLGWSVPEGTDERFTLQQAATVFSFDRVNKAGAKFDWDKLNWLNSQVLHDLPKDQLLHELKPLWSEAGWALPEENWCLDLAELLGPSLTLLKDGVDQARPFFEEPTLQADGLEQLAMEGAKAGLSNLLDQLDSTSWDGFDVKQAQQLLTNAAQAANVKKGVIMKSLRAALLGRLQGPDLITTWGLLARIGQDLNRLRRCL</sequence>
<feature type="chain" id="PRO_1000001934" description="Glutamate--tRNA ligase">
    <location>
        <begin position="1"/>
        <end position="476"/>
    </location>
</feature>
<feature type="short sequence motif" description="'HIGH' region" evidence="1">
    <location>
        <begin position="9"/>
        <end position="19"/>
    </location>
</feature>
<feature type="short sequence motif" description="'KMSKS' region" evidence="1">
    <location>
        <begin position="248"/>
        <end position="252"/>
    </location>
</feature>
<feature type="binding site" evidence="1">
    <location>
        <position position="251"/>
    </location>
    <ligand>
        <name>ATP</name>
        <dbReference type="ChEBI" id="CHEBI:30616"/>
    </ligand>
</feature>
<protein>
    <recommendedName>
        <fullName evidence="1">Glutamate--tRNA ligase</fullName>
        <ecNumber evidence="1">6.1.1.17</ecNumber>
    </recommendedName>
    <alternativeName>
        <fullName evidence="1">Glutamyl-tRNA synthetase</fullName>
        <shortName evidence="1">GluRS</shortName>
    </alternativeName>
</protein>
<name>SYE_PROM3</name>
<evidence type="ECO:0000255" key="1">
    <source>
        <dbReference type="HAMAP-Rule" id="MF_00022"/>
    </source>
</evidence>
<keyword id="KW-0030">Aminoacyl-tRNA synthetase</keyword>
<keyword id="KW-0067">ATP-binding</keyword>
<keyword id="KW-0963">Cytoplasm</keyword>
<keyword id="KW-0436">Ligase</keyword>
<keyword id="KW-0547">Nucleotide-binding</keyword>
<keyword id="KW-0648">Protein biosynthesis</keyword>
<dbReference type="EC" id="6.1.1.17" evidence="1"/>
<dbReference type="EMBL" id="CP000554">
    <property type="protein sequence ID" value="ABM77430.1"/>
    <property type="molecule type" value="Genomic_DNA"/>
</dbReference>
<dbReference type="RefSeq" id="WP_011825345.1">
    <property type="nucleotide sequence ID" value="NC_008820.1"/>
</dbReference>
<dbReference type="SMR" id="A2C7H0"/>
<dbReference type="STRING" id="59922.P9303_06791"/>
<dbReference type="KEGG" id="pmf:P9303_06791"/>
<dbReference type="HOGENOM" id="CLU_015768_6_0_3"/>
<dbReference type="BioCyc" id="PMAR59922:G1G80-625-MONOMER"/>
<dbReference type="Proteomes" id="UP000002274">
    <property type="component" value="Chromosome"/>
</dbReference>
<dbReference type="GO" id="GO:0005829">
    <property type="term" value="C:cytosol"/>
    <property type="evidence" value="ECO:0007669"/>
    <property type="project" value="TreeGrafter"/>
</dbReference>
<dbReference type="GO" id="GO:0005524">
    <property type="term" value="F:ATP binding"/>
    <property type="evidence" value="ECO:0007669"/>
    <property type="project" value="UniProtKB-UniRule"/>
</dbReference>
<dbReference type="GO" id="GO:0004818">
    <property type="term" value="F:glutamate-tRNA ligase activity"/>
    <property type="evidence" value="ECO:0007669"/>
    <property type="project" value="UniProtKB-UniRule"/>
</dbReference>
<dbReference type="GO" id="GO:0000049">
    <property type="term" value="F:tRNA binding"/>
    <property type="evidence" value="ECO:0007669"/>
    <property type="project" value="InterPro"/>
</dbReference>
<dbReference type="GO" id="GO:0008270">
    <property type="term" value="F:zinc ion binding"/>
    <property type="evidence" value="ECO:0007669"/>
    <property type="project" value="InterPro"/>
</dbReference>
<dbReference type="GO" id="GO:0006424">
    <property type="term" value="P:glutamyl-tRNA aminoacylation"/>
    <property type="evidence" value="ECO:0007669"/>
    <property type="project" value="UniProtKB-UniRule"/>
</dbReference>
<dbReference type="CDD" id="cd00808">
    <property type="entry name" value="GluRS_core"/>
    <property type="match status" value="1"/>
</dbReference>
<dbReference type="FunFam" id="3.40.50.620:FF:000007">
    <property type="entry name" value="Glutamate--tRNA ligase"/>
    <property type="match status" value="1"/>
</dbReference>
<dbReference type="Gene3D" id="1.10.10.350">
    <property type="match status" value="1"/>
</dbReference>
<dbReference type="Gene3D" id="1.10.8.70">
    <property type="entry name" value="Glutamate-tRNA synthetase, class I, anticodon-binding domain 1"/>
    <property type="match status" value="1"/>
</dbReference>
<dbReference type="Gene3D" id="1.10.1160.10">
    <property type="entry name" value="Glutamyl-trna Synthetase, Domain 2"/>
    <property type="match status" value="1"/>
</dbReference>
<dbReference type="Gene3D" id="3.90.800.10">
    <property type="entry name" value="Glutamyl-tRNA Synthetase, Domain 3"/>
    <property type="match status" value="1"/>
</dbReference>
<dbReference type="Gene3D" id="3.40.50.620">
    <property type="entry name" value="HUPs"/>
    <property type="match status" value="1"/>
</dbReference>
<dbReference type="HAMAP" id="MF_00022">
    <property type="entry name" value="Glu_tRNA_synth_type1"/>
    <property type="match status" value="1"/>
</dbReference>
<dbReference type="InterPro" id="IPR045462">
    <property type="entry name" value="aa-tRNA-synth_I_cd-bd"/>
</dbReference>
<dbReference type="InterPro" id="IPR020751">
    <property type="entry name" value="aa-tRNA-synth_I_codon-bd_sub2"/>
</dbReference>
<dbReference type="InterPro" id="IPR001412">
    <property type="entry name" value="aa-tRNA-synth_I_CS"/>
</dbReference>
<dbReference type="InterPro" id="IPR008925">
    <property type="entry name" value="aa_tRNA-synth_I_cd-bd_sf"/>
</dbReference>
<dbReference type="InterPro" id="IPR004527">
    <property type="entry name" value="Glu-tRNA-ligase_bac/mito"/>
</dbReference>
<dbReference type="InterPro" id="IPR020752">
    <property type="entry name" value="Glu-tRNA-synth_I_codon-bd_sub1"/>
</dbReference>
<dbReference type="InterPro" id="IPR000924">
    <property type="entry name" value="Glu/Gln-tRNA-synth"/>
</dbReference>
<dbReference type="InterPro" id="IPR020058">
    <property type="entry name" value="Glu/Gln-tRNA-synth_Ib_cat-dom"/>
</dbReference>
<dbReference type="InterPro" id="IPR020061">
    <property type="entry name" value="Glu_tRNA_lig_a-bdl"/>
</dbReference>
<dbReference type="InterPro" id="IPR049940">
    <property type="entry name" value="GluQ/Sye"/>
</dbReference>
<dbReference type="InterPro" id="IPR033910">
    <property type="entry name" value="GluRS_core"/>
</dbReference>
<dbReference type="InterPro" id="IPR014729">
    <property type="entry name" value="Rossmann-like_a/b/a_fold"/>
</dbReference>
<dbReference type="NCBIfam" id="TIGR00464">
    <property type="entry name" value="gltX_bact"/>
    <property type="match status" value="1"/>
</dbReference>
<dbReference type="PANTHER" id="PTHR43311">
    <property type="entry name" value="GLUTAMATE--TRNA LIGASE"/>
    <property type="match status" value="1"/>
</dbReference>
<dbReference type="PANTHER" id="PTHR43311:SF2">
    <property type="entry name" value="GLUTAMATE--TRNA LIGASE, MITOCHONDRIAL-RELATED"/>
    <property type="match status" value="1"/>
</dbReference>
<dbReference type="Pfam" id="PF19269">
    <property type="entry name" value="Anticodon_2"/>
    <property type="match status" value="1"/>
</dbReference>
<dbReference type="Pfam" id="PF00749">
    <property type="entry name" value="tRNA-synt_1c"/>
    <property type="match status" value="1"/>
</dbReference>
<dbReference type="PRINTS" id="PR00987">
    <property type="entry name" value="TRNASYNTHGLU"/>
</dbReference>
<dbReference type="SUPFAM" id="SSF48163">
    <property type="entry name" value="An anticodon-binding domain of class I aminoacyl-tRNA synthetases"/>
    <property type="match status" value="1"/>
</dbReference>
<dbReference type="SUPFAM" id="SSF52374">
    <property type="entry name" value="Nucleotidylyl transferase"/>
    <property type="match status" value="1"/>
</dbReference>
<dbReference type="PROSITE" id="PS00178">
    <property type="entry name" value="AA_TRNA_LIGASE_I"/>
    <property type="match status" value="1"/>
</dbReference>
<accession>A2C7H0</accession>
<comment type="function">
    <text evidence="1">Catalyzes the attachment of glutamate to tRNA(Glu) in a two-step reaction: glutamate is first activated by ATP to form Glu-AMP and then transferred to the acceptor end of tRNA(Glu).</text>
</comment>
<comment type="catalytic activity">
    <reaction evidence="1">
        <text>tRNA(Glu) + L-glutamate + ATP = L-glutamyl-tRNA(Glu) + AMP + diphosphate</text>
        <dbReference type="Rhea" id="RHEA:23540"/>
        <dbReference type="Rhea" id="RHEA-COMP:9663"/>
        <dbReference type="Rhea" id="RHEA-COMP:9680"/>
        <dbReference type="ChEBI" id="CHEBI:29985"/>
        <dbReference type="ChEBI" id="CHEBI:30616"/>
        <dbReference type="ChEBI" id="CHEBI:33019"/>
        <dbReference type="ChEBI" id="CHEBI:78442"/>
        <dbReference type="ChEBI" id="CHEBI:78520"/>
        <dbReference type="ChEBI" id="CHEBI:456215"/>
        <dbReference type="EC" id="6.1.1.17"/>
    </reaction>
</comment>
<comment type="subunit">
    <text evidence="1">Monomer.</text>
</comment>
<comment type="subcellular location">
    <subcellularLocation>
        <location evidence="1">Cytoplasm</location>
    </subcellularLocation>
</comment>
<comment type="similarity">
    <text evidence="1">Belongs to the class-I aminoacyl-tRNA synthetase family. Glutamate--tRNA ligase type 1 subfamily.</text>
</comment>
<proteinExistence type="inferred from homology"/>
<gene>
    <name evidence="1" type="primary">gltX</name>
    <name type="ordered locus">P9303_06791</name>
</gene>
<reference key="1">
    <citation type="journal article" date="2007" name="PLoS Genet.">
        <title>Patterns and implications of gene gain and loss in the evolution of Prochlorococcus.</title>
        <authorList>
            <person name="Kettler G.C."/>
            <person name="Martiny A.C."/>
            <person name="Huang K."/>
            <person name="Zucker J."/>
            <person name="Coleman M.L."/>
            <person name="Rodrigue S."/>
            <person name="Chen F."/>
            <person name="Lapidus A."/>
            <person name="Ferriera S."/>
            <person name="Johnson J."/>
            <person name="Steglich C."/>
            <person name="Church G.M."/>
            <person name="Richardson P."/>
            <person name="Chisholm S.W."/>
        </authorList>
    </citation>
    <scope>NUCLEOTIDE SEQUENCE [LARGE SCALE GENOMIC DNA]</scope>
    <source>
        <strain>MIT 9303</strain>
    </source>
</reference>